<comment type="function">
    <text evidence="1">Catalyzes the transfer of an acyl group from acyl-phosphate (acyl-PO(4)) to glycerol-3-phosphate (G3P) to form lysophosphatidic acid (LPA). This enzyme utilizes acyl-phosphate as fatty acyl donor, but not acyl-CoA or acyl-ACP.</text>
</comment>
<comment type="catalytic activity">
    <reaction evidence="1">
        <text>an acyl phosphate + sn-glycerol 3-phosphate = a 1-acyl-sn-glycero-3-phosphate + phosphate</text>
        <dbReference type="Rhea" id="RHEA:34075"/>
        <dbReference type="ChEBI" id="CHEBI:43474"/>
        <dbReference type="ChEBI" id="CHEBI:57597"/>
        <dbReference type="ChEBI" id="CHEBI:57970"/>
        <dbReference type="ChEBI" id="CHEBI:59918"/>
        <dbReference type="EC" id="2.3.1.275"/>
    </reaction>
</comment>
<comment type="pathway">
    <text evidence="1">Lipid metabolism; phospholipid metabolism.</text>
</comment>
<comment type="subunit">
    <text evidence="1">Probably interacts with PlsX.</text>
</comment>
<comment type="subcellular location">
    <subcellularLocation>
        <location evidence="1">Cell inner membrane</location>
        <topology evidence="1">Multi-pass membrane protein</topology>
    </subcellularLocation>
</comment>
<comment type="similarity">
    <text evidence="1">Belongs to the PlsY family.</text>
</comment>
<feature type="chain" id="PRO_0000250282" description="Glycerol-3-phosphate acyltransferase">
    <location>
        <begin position="1"/>
        <end position="201"/>
    </location>
</feature>
<feature type="transmembrane region" description="Helical" evidence="1">
    <location>
        <begin position="5"/>
        <end position="25"/>
    </location>
</feature>
<feature type="transmembrane region" description="Helical" evidence="1">
    <location>
        <begin position="55"/>
        <end position="75"/>
    </location>
</feature>
<feature type="transmembrane region" description="Helical" evidence="1">
    <location>
        <begin position="88"/>
        <end position="108"/>
    </location>
</feature>
<feature type="transmembrane region" description="Helical" evidence="1">
    <location>
        <begin position="118"/>
        <end position="138"/>
    </location>
</feature>
<feature type="transmembrane region" description="Helical" evidence="1">
    <location>
        <begin position="164"/>
        <end position="184"/>
    </location>
</feature>
<organism>
    <name type="scientific">Anaeromyxobacter dehalogenans (strain 2CP-C)</name>
    <dbReference type="NCBI Taxonomy" id="290397"/>
    <lineage>
        <taxon>Bacteria</taxon>
        <taxon>Pseudomonadati</taxon>
        <taxon>Myxococcota</taxon>
        <taxon>Myxococcia</taxon>
        <taxon>Myxococcales</taxon>
        <taxon>Cystobacterineae</taxon>
        <taxon>Anaeromyxobacteraceae</taxon>
        <taxon>Anaeromyxobacter</taxon>
    </lineage>
</organism>
<proteinExistence type="inferred from homology"/>
<sequence>MSPDLLGAVLVAAGYLAGSIPFGVVLGRLVLGVDVRTVGSGNIGATNVARAGGKKMGVLVLVLDAAKAIVPILLARRLLAGAPHAEAWSTAVAVAAFVGHLFPVWLGFKGGKGVATGLGIFAVLAPWAALAGLVGYAVAYGLTRISSVGSLTGTALCAAGGFATYGVRHPVPWAGLAIALLIFLRHRENIRRLVRGEEKKV</sequence>
<accession>Q2IH98</accession>
<keyword id="KW-0997">Cell inner membrane</keyword>
<keyword id="KW-1003">Cell membrane</keyword>
<keyword id="KW-0444">Lipid biosynthesis</keyword>
<keyword id="KW-0443">Lipid metabolism</keyword>
<keyword id="KW-0472">Membrane</keyword>
<keyword id="KW-0594">Phospholipid biosynthesis</keyword>
<keyword id="KW-1208">Phospholipid metabolism</keyword>
<keyword id="KW-1185">Reference proteome</keyword>
<keyword id="KW-0808">Transferase</keyword>
<keyword id="KW-0812">Transmembrane</keyword>
<keyword id="KW-1133">Transmembrane helix</keyword>
<evidence type="ECO:0000255" key="1">
    <source>
        <dbReference type="HAMAP-Rule" id="MF_01043"/>
    </source>
</evidence>
<gene>
    <name evidence="1" type="primary">plsY</name>
    <name type="ordered locus">Adeh_4194</name>
</gene>
<name>PLSY_ANADE</name>
<dbReference type="EC" id="2.3.1.275" evidence="1"/>
<dbReference type="EMBL" id="CP000251">
    <property type="protein sequence ID" value="ABC83958.1"/>
    <property type="molecule type" value="Genomic_DNA"/>
</dbReference>
<dbReference type="RefSeq" id="WP_011423240.1">
    <property type="nucleotide sequence ID" value="NC_007760.1"/>
</dbReference>
<dbReference type="SMR" id="Q2IH98"/>
<dbReference type="STRING" id="290397.Adeh_4194"/>
<dbReference type="KEGG" id="ade:Adeh_4194"/>
<dbReference type="eggNOG" id="COG0344">
    <property type="taxonomic scope" value="Bacteria"/>
</dbReference>
<dbReference type="HOGENOM" id="CLU_081254_1_0_7"/>
<dbReference type="OrthoDB" id="9777124at2"/>
<dbReference type="UniPathway" id="UPA00085"/>
<dbReference type="Proteomes" id="UP000001935">
    <property type="component" value="Chromosome"/>
</dbReference>
<dbReference type="GO" id="GO:0005886">
    <property type="term" value="C:plasma membrane"/>
    <property type="evidence" value="ECO:0007669"/>
    <property type="project" value="UniProtKB-SubCell"/>
</dbReference>
<dbReference type="GO" id="GO:0043772">
    <property type="term" value="F:acyl-phosphate glycerol-3-phosphate acyltransferase activity"/>
    <property type="evidence" value="ECO:0007669"/>
    <property type="project" value="UniProtKB-UniRule"/>
</dbReference>
<dbReference type="GO" id="GO:0008654">
    <property type="term" value="P:phospholipid biosynthetic process"/>
    <property type="evidence" value="ECO:0007669"/>
    <property type="project" value="UniProtKB-UniRule"/>
</dbReference>
<dbReference type="HAMAP" id="MF_01043">
    <property type="entry name" value="PlsY"/>
    <property type="match status" value="1"/>
</dbReference>
<dbReference type="InterPro" id="IPR003811">
    <property type="entry name" value="G3P_acylTferase_PlsY"/>
</dbReference>
<dbReference type="NCBIfam" id="TIGR00023">
    <property type="entry name" value="glycerol-3-phosphate 1-O-acyltransferase PlsY"/>
    <property type="match status" value="1"/>
</dbReference>
<dbReference type="PANTHER" id="PTHR30309:SF0">
    <property type="entry name" value="GLYCEROL-3-PHOSPHATE ACYLTRANSFERASE-RELATED"/>
    <property type="match status" value="1"/>
</dbReference>
<dbReference type="PANTHER" id="PTHR30309">
    <property type="entry name" value="INNER MEMBRANE PROTEIN YGIH"/>
    <property type="match status" value="1"/>
</dbReference>
<dbReference type="Pfam" id="PF02660">
    <property type="entry name" value="G3P_acyltransf"/>
    <property type="match status" value="1"/>
</dbReference>
<dbReference type="SMART" id="SM01207">
    <property type="entry name" value="G3P_acyltransf"/>
    <property type="match status" value="1"/>
</dbReference>
<protein>
    <recommendedName>
        <fullName evidence="1">Glycerol-3-phosphate acyltransferase</fullName>
    </recommendedName>
    <alternativeName>
        <fullName evidence="1">Acyl-PO4 G3P acyltransferase</fullName>
    </alternativeName>
    <alternativeName>
        <fullName evidence="1">Acyl-phosphate--glycerol-3-phosphate acyltransferase</fullName>
    </alternativeName>
    <alternativeName>
        <fullName evidence="1">G3P acyltransferase</fullName>
        <shortName evidence="1">GPAT</shortName>
        <ecNumber evidence="1">2.3.1.275</ecNumber>
    </alternativeName>
    <alternativeName>
        <fullName evidence="1">Lysophosphatidic acid synthase</fullName>
        <shortName evidence="1">LPA synthase</shortName>
    </alternativeName>
</protein>
<reference key="1">
    <citation type="submission" date="2006-01" db="EMBL/GenBank/DDBJ databases">
        <title>Complete sequence of Anaeromyxobacter dehalogenans 2CP-C.</title>
        <authorList>
            <person name="Copeland A."/>
            <person name="Lucas S."/>
            <person name="Lapidus A."/>
            <person name="Barry K."/>
            <person name="Detter J.C."/>
            <person name="Glavina T."/>
            <person name="Hammon N."/>
            <person name="Israni S."/>
            <person name="Pitluck S."/>
            <person name="Brettin T."/>
            <person name="Bruce D."/>
            <person name="Han C."/>
            <person name="Tapia R."/>
            <person name="Gilna P."/>
            <person name="Kiss H."/>
            <person name="Schmutz J."/>
            <person name="Larimer F."/>
            <person name="Land M."/>
            <person name="Kyrpides N."/>
            <person name="Anderson I."/>
            <person name="Sanford R.A."/>
            <person name="Ritalahti K.M."/>
            <person name="Thomas H.S."/>
            <person name="Kirby J.R."/>
            <person name="Zhulin I.B."/>
            <person name="Loeffler F.E."/>
            <person name="Richardson P."/>
        </authorList>
    </citation>
    <scope>NUCLEOTIDE SEQUENCE [LARGE SCALE GENOMIC DNA]</scope>
    <source>
        <strain>2CP-C</strain>
    </source>
</reference>